<keyword id="KW-0002">3D-structure</keyword>
<keyword id="KW-0025">Alternative splicing</keyword>
<keyword id="KW-1003">Cell membrane</keyword>
<keyword id="KW-1015">Disulfide bond</keyword>
<keyword id="KW-0256">Endoplasmic reticulum</keyword>
<keyword id="KW-0967">Endosome</keyword>
<keyword id="KW-0325">Glycoprotein</keyword>
<keyword id="KW-0333">Golgi apparatus</keyword>
<keyword id="KW-0391">Immunity</keyword>
<keyword id="KW-0393">Immunoglobulin domain</keyword>
<keyword id="KW-0399">Innate immunity</keyword>
<keyword id="KW-0472">Membrane</keyword>
<keyword id="KW-0490">MHC I</keyword>
<keyword id="KW-1185">Reference proteome</keyword>
<keyword id="KW-0732">Signal</keyword>
<keyword id="KW-0812">Transmembrane</keyword>
<keyword id="KW-1133">Transmembrane helix</keyword>
<comment type="function">
    <text evidence="1 4 6 7 9 10">Antigen-presenting molecule specialized in displaying microbial pyrimidine-based metabolites to alpha-beta T cell receptors (TCR) on innate-type mucosal-associated invariant T (MAIT) cells. In complex with B2M preferentially presents riboflavin-derived metabolites to semi-invariant TRAV1 TCRs on MAIT cells, guiding immune surveillance of the microbial metabolome at mucosal epithelial barriers (PubMed:15802267, PubMed:20581831, PubMed:24101382, PubMed:38537698). Signature pyrimidine-based microbial antigens are generated via non-enzymatic condensation of metabolite intermediates of the riboflavin pathway with by-products arising from other metabolic pathways such as glycolysis. Typical potent antigenic metabolites are 5-(2-oxoethylideneamino)-6-D-ribitylaminouracil (5-OE-RU) and 5-(2-oxopropylideneamino)-6-D-ribitylaminouracil (5-OP-RU), products of condensation of 5-amino-6-D-ribityaminouracil (5-A-RU) with glyoxal or methylglyoxal by-products, respectively. May present microbial antigens to various TRAV1-negative MAIT cell subsets, providing for unique recognition of diverse microbes, including pathogens that do not synthesize riboflavin. Upon antigen recognition, elicits rapid innate-type MAIT cell activation to eliminate pathogenic microbes by directly killing infected cells (By similarity). During T cell development, drives thymic selection and post-thymic terminal differentiation of MAIT cells in a process dependent on commensal microflora (PubMed:12634786, PubMed:31113973). Acts as an immune sensor of cancer cell metabolome. May present a tumor-specific or -associated metabolite essential for cancer cell survival to a pan-cancer TCR on a non-MAIT CD8-positive T cell clone, triggering T cell-mediated killing of a wide range of cancer cell types (By similarity). May present tumor-enriched pyridoxal and pyridoxal 5'-phosphate antigens, enabling preferential recognition of cancer cells (By similarity). Presents nucleobase carbonyl adducts generated during oxidative stress. Captures M3Ade, a nucleobase adduct composed of one adenine modified by a malondialdehyde trimer, for recognition by MR1-restricted T cell clones expressing a polyclonal TCR repertoire (By similarity).</text>
</comment>
<comment type="subunit">
    <text evidence="1 8 10">Heterotrimer that consists of MR1, B2M and metabolite antigen (PubMed:38537698). Major classes of metabolite ligands presented by MR1 include riboflavin-related antigens, pyrimidines and ribityl lumazines, nucleobase adducts and folate derivatives. Forms reversible covalent Schiff base complexes with microbial pyrimidine-based metabolite, which serves as a molecular switch triggering complete folding, stable association with B2M and translocation of the ternary complex from endoplasmic reticulum to the plasma membrane. Alternatively, forms non-Schiff base complexes with ribityl lumazines (By similarity). On antigen-presenting cells, the ternary complex interacts with TCR on MR1-restricted CD4- or CD8-positive T cell subsets (PubMed:24101382). Interacts with TAPBP and TAPBPL chaperones in the endoplasmic reticulum. TAPBP associated or not with MHC class I peptide loading complex binds ligand-free MR1 or MR1-B2M complex, providing for stable MR1 pools ready for metabolite antigen processing. TAPBPL interacts with MR1 in a ligand-independent way; this interaction may stabilize MR1 pool and facilitate ligand loading and dissociation (By similarity). Structurally, MR1-B2M heterodimer adopts a topology similar to classical MHC class I molecules, with alpha-1 and alpha-2 domains of MR1 forming the antigen-binding cleft composed of two alpha-helices resting on a floor of 7-stranded anti-parallel beta-pleated sheet (By similarity).</text>
</comment>
<comment type="subcellular location">
    <subcellularLocation>
        <location evidence="5">Cell membrane</location>
        <topology evidence="1">Single-pass type I membrane protein</topology>
    </subcellularLocation>
    <subcellularLocation>
        <location evidence="1">Endoplasmic reticulum membrane</location>
        <topology evidence="2">Single-pass type I membrane protein</topology>
    </subcellularLocation>
    <subcellularLocation>
        <location evidence="1">Golgi apparatus membrane</location>
        <topology evidence="2">Single-pass type I membrane protein</topology>
    </subcellularLocation>
    <subcellularLocation>
        <location evidence="1">Early endosome membrane</location>
        <topology evidence="2">Single-pass type I membrane protein</topology>
    </subcellularLocation>
    <subcellularLocation>
        <location evidence="1">Late endosome membrane</location>
        <topology evidence="2">Single-pass type I membrane protein</topology>
    </subcellularLocation>
    <text evidence="1">In the absence of antigen remains within the endoplasmic reticulum where it acts as a metabolite sensor. Antigen binding triggers trafficking of the ternary complex to the plasma membrane. After presentation, most of these complexes are rapidly internalized and degraded via endocytosis. A small subset recycles via endosomes back to the plasma membrane and may thus acquire and present new antigens that do not efficiently reach the endoplasmic reticulum.</text>
</comment>
<comment type="alternative products">
    <event type="alternative splicing"/>
    <isoform>
        <id>Q8HWB0-1</id>
        <name>1</name>
        <name>Mr1a</name>
        <sequence type="displayed"/>
    </isoform>
    <isoform>
        <id>Q8HWB0-2</id>
        <name>2</name>
        <sequence type="described" ref="VSP_034759"/>
    </isoform>
</comment>
<comment type="tissue specificity">
    <text evidence="11 12">Highly expressed thymus. Expressed in liver, kidney, spleen, heart, brain, lung, skeletal muscle and testis.</text>
</comment>
<comment type="domain">
    <text evidence="1">The alpha-1 domain is a structural part of antigen-binding cleft.</text>
</comment>
<comment type="domain">
    <text evidence="1">The alpha-2 domain is a structural part of antigen-binding cleft.</text>
</comment>
<comment type="PTM">
    <text evidence="1">N-glycosylated.</text>
</comment>
<comment type="disruption phenotype">
    <text evidence="4">Mutant mice lack invariant MAIT cells due to impaired thymic selection. They show normal development of T, B and NK cells.</text>
</comment>
<comment type="miscellaneous">
    <text>MR1 is detected in an open versus folded conformation. Only the folded MR1 conformer activates MAIT cells.</text>
</comment>
<comment type="similarity">
    <text evidence="15">Belongs to the MHC class I family.</text>
</comment>
<name>HMR1_MOUSE</name>
<proteinExistence type="evidence at protein level"/>
<accession>Q8HWB0</accession>
<accession>O19478</accession>
<reference key="1">
    <citation type="journal article" date="1997" name="Biochem. Biophys. Res. Commun.">
        <title>A highly conserved major histocompatibility complex class I-related gene in mammals.</title>
        <authorList>
            <person name="Yamaguchi H."/>
            <person name="Hirai M."/>
            <person name="Kurosawa Y."/>
            <person name="Hashimoto K."/>
        </authorList>
    </citation>
    <scope>NUCLEOTIDE SEQUENCE [GENOMIC DNA / MRNA] (ISOFORM 1)</scope>
    <scope>TISSUE SPECIFICITY</scope>
    <source>
        <strain>BALB/cJ</strain>
        <tissue>Lung</tissue>
    </source>
</reference>
<reference key="2">
    <citation type="journal article" date="1998" name="J. Immunol.">
        <title>Genomics, isoforms, expression, and phylogeny of the MHC class I-related MR1 gene.</title>
        <authorList>
            <person name="Riegert P."/>
            <person name="Wanner V."/>
            <person name="Bahram S."/>
        </authorList>
    </citation>
    <scope>NUCLEOTIDE SEQUENCE [GENOMIC DNA / MRNA] (ISOFORM 1)</scope>
    <scope>ALTERNATIVE SPLICING</scope>
    <scope>TISSUE SPECIFICITY</scope>
    <source>
        <strain>C57BL/6J</strain>
        <strain>C57BL/6J X 129/SvJ</strain>
        <tissue>Spleen</tissue>
    </source>
</reference>
<reference key="3">
    <citation type="journal article" date="2005" name="Science">
        <title>The transcriptional landscape of the mammalian genome.</title>
        <authorList>
            <person name="Carninci P."/>
            <person name="Kasukawa T."/>
            <person name="Katayama S."/>
            <person name="Gough J."/>
            <person name="Frith M.C."/>
            <person name="Maeda N."/>
            <person name="Oyama R."/>
            <person name="Ravasi T."/>
            <person name="Lenhard B."/>
            <person name="Wells C."/>
            <person name="Kodzius R."/>
            <person name="Shimokawa K."/>
            <person name="Bajic V.B."/>
            <person name="Brenner S.E."/>
            <person name="Batalov S."/>
            <person name="Forrest A.R."/>
            <person name="Zavolan M."/>
            <person name="Davis M.J."/>
            <person name="Wilming L.G."/>
            <person name="Aidinis V."/>
            <person name="Allen J.E."/>
            <person name="Ambesi-Impiombato A."/>
            <person name="Apweiler R."/>
            <person name="Aturaliya R.N."/>
            <person name="Bailey T.L."/>
            <person name="Bansal M."/>
            <person name="Baxter L."/>
            <person name="Beisel K.W."/>
            <person name="Bersano T."/>
            <person name="Bono H."/>
            <person name="Chalk A.M."/>
            <person name="Chiu K.P."/>
            <person name="Choudhary V."/>
            <person name="Christoffels A."/>
            <person name="Clutterbuck D.R."/>
            <person name="Crowe M.L."/>
            <person name="Dalla E."/>
            <person name="Dalrymple B.P."/>
            <person name="de Bono B."/>
            <person name="Della Gatta G."/>
            <person name="di Bernardo D."/>
            <person name="Down T."/>
            <person name="Engstrom P."/>
            <person name="Fagiolini M."/>
            <person name="Faulkner G."/>
            <person name="Fletcher C.F."/>
            <person name="Fukushima T."/>
            <person name="Furuno M."/>
            <person name="Futaki S."/>
            <person name="Gariboldi M."/>
            <person name="Georgii-Hemming P."/>
            <person name="Gingeras T.R."/>
            <person name="Gojobori T."/>
            <person name="Green R.E."/>
            <person name="Gustincich S."/>
            <person name="Harbers M."/>
            <person name="Hayashi Y."/>
            <person name="Hensch T.K."/>
            <person name="Hirokawa N."/>
            <person name="Hill D."/>
            <person name="Huminiecki L."/>
            <person name="Iacono M."/>
            <person name="Ikeo K."/>
            <person name="Iwama A."/>
            <person name="Ishikawa T."/>
            <person name="Jakt M."/>
            <person name="Kanapin A."/>
            <person name="Katoh M."/>
            <person name="Kawasawa Y."/>
            <person name="Kelso J."/>
            <person name="Kitamura H."/>
            <person name="Kitano H."/>
            <person name="Kollias G."/>
            <person name="Krishnan S.P."/>
            <person name="Kruger A."/>
            <person name="Kummerfeld S.K."/>
            <person name="Kurochkin I.V."/>
            <person name="Lareau L.F."/>
            <person name="Lazarevic D."/>
            <person name="Lipovich L."/>
            <person name="Liu J."/>
            <person name="Liuni S."/>
            <person name="McWilliam S."/>
            <person name="Madan Babu M."/>
            <person name="Madera M."/>
            <person name="Marchionni L."/>
            <person name="Matsuda H."/>
            <person name="Matsuzawa S."/>
            <person name="Miki H."/>
            <person name="Mignone F."/>
            <person name="Miyake S."/>
            <person name="Morris K."/>
            <person name="Mottagui-Tabar S."/>
            <person name="Mulder N."/>
            <person name="Nakano N."/>
            <person name="Nakauchi H."/>
            <person name="Ng P."/>
            <person name="Nilsson R."/>
            <person name="Nishiguchi S."/>
            <person name="Nishikawa S."/>
            <person name="Nori F."/>
            <person name="Ohara O."/>
            <person name="Okazaki Y."/>
            <person name="Orlando V."/>
            <person name="Pang K.C."/>
            <person name="Pavan W.J."/>
            <person name="Pavesi G."/>
            <person name="Pesole G."/>
            <person name="Petrovsky N."/>
            <person name="Piazza S."/>
            <person name="Reed J."/>
            <person name="Reid J.F."/>
            <person name="Ring B.Z."/>
            <person name="Ringwald M."/>
            <person name="Rost B."/>
            <person name="Ruan Y."/>
            <person name="Salzberg S.L."/>
            <person name="Sandelin A."/>
            <person name="Schneider C."/>
            <person name="Schoenbach C."/>
            <person name="Sekiguchi K."/>
            <person name="Semple C.A."/>
            <person name="Seno S."/>
            <person name="Sessa L."/>
            <person name="Sheng Y."/>
            <person name="Shibata Y."/>
            <person name="Shimada H."/>
            <person name="Shimada K."/>
            <person name="Silva D."/>
            <person name="Sinclair B."/>
            <person name="Sperling S."/>
            <person name="Stupka E."/>
            <person name="Sugiura K."/>
            <person name="Sultana R."/>
            <person name="Takenaka Y."/>
            <person name="Taki K."/>
            <person name="Tammoja K."/>
            <person name="Tan S.L."/>
            <person name="Tang S."/>
            <person name="Taylor M.S."/>
            <person name="Tegner J."/>
            <person name="Teichmann S.A."/>
            <person name="Ueda H.R."/>
            <person name="van Nimwegen E."/>
            <person name="Verardo R."/>
            <person name="Wei C.L."/>
            <person name="Yagi K."/>
            <person name="Yamanishi H."/>
            <person name="Zabarovsky E."/>
            <person name="Zhu S."/>
            <person name="Zimmer A."/>
            <person name="Hide W."/>
            <person name="Bult C."/>
            <person name="Grimmond S.M."/>
            <person name="Teasdale R.D."/>
            <person name="Liu E.T."/>
            <person name="Brusic V."/>
            <person name="Quackenbush J."/>
            <person name="Wahlestedt C."/>
            <person name="Mattick J.S."/>
            <person name="Hume D.A."/>
            <person name="Kai C."/>
            <person name="Sasaki D."/>
            <person name="Tomaru Y."/>
            <person name="Fukuda S."/>
            <person name="Kanamori-Katayama M."/>
            <person name="Suzuki M."/>
            <person name="Aoki J."/>
            <person name="Arakawa T."/>
            <person name="Iida J."/>
            <person name="Imamura K."/>
            <person name="Itoh M."/>
            <person name="Kato T."/>
            <person name="Kawaji H."/>
            <person name="Kawagashira N."/>
            <person name="Kawashima T."/>
            <person name="Kojima M."/>
            <person name="Kondo S."/>
            <person name="Konno H."/>
            <person name="Nakano K."/>
            <person name="Ninomiya N."/>
            <person name="Nishio T."/>
            <person name="Okada M."/>
            <person name="Plessy C."/>
            <person name="Shibata K."/>
            <person name="Shiraki T."/>
            <person name="Suzuki S."/>
            <person name="Tagami M."/>
            <person name="Waki K."/>
            <person name="Watahiki A."/>
            <person name="Okamura-Oho Y."/>
            <person name="Suzuki H."/>
            <person name="Kawai J."/>
            <person name="Hayashizaki Y."/>
        </authorList>
    </citation>
    <scope>NUCLEOTIDE SEQUENCE [LARGE SCALE MRNA] (ISOFORM 2)</scope>
    <source>
        <strain>C57BL/6J</strain>
        <tissue>Thymus</tissue>
    </source>
</reference>
<reference key="4">
    <citation type="journal article" date="2004" name="Genome Res.">
        <title>The status, quality, and expansion of the NIH full-length cDNA project: the Mammalian Gene Collection (MGC).</title>
        <authorList>
            <consortium name="The MGC Project Team"/>
        </authorList>
    </citation>
    <scope>NUCLEOTIDE SEQUENCE [LARGE SCALE MRNA] (ISOFORM 1)</scope>
    <source>
        <strain>Czech II</strain>
        <tissue>Mammary tumor</tissue>
    </source>
</reference>
<reference key="5">
    <citation type="journal article" date="2002" name="Biochem. Biophys. Res. Commun.">
        <title>Association of MR1 protein, an MHC class I-related molecule, with beta(2)-microglobulin.</title>
        <authorList>
            <person name="Yamaguchi H."/>
            <person name="Hashimoto K."/>
        </authorList>
    </citation>
    <scope>INTERACTION WITH B2M</scope>
</reference>
<reference key="6">
    <citation type="journal article" date="2003" name="J. Immunol.">
        <title>Biochemical features of the MHC-related protein 1 consistent with an immunological function.</title>
        <authorList>
            <person name="Miley M.J."/>
            <person name="Truscott S.M."/>
            <person name="Yu Y.Y."/>
            <person name="Gilfillan S."/>
            <person name="Fremont D.H."/>
            <person name="Hansen T.H."/>
            <person name="Lybarger L."/>
        </authorList>
    </citation>
    <scope>SUBCELLULAR LOCATION</scope>
    <scope>MUTAGENESIS OF CYS-279</scope>
</reference>
<reference key="7">
    <citation type="journal article" date="2003" name="Nature">
        <title>Selection of evolutionarily conserved mucosal-associated invariant T cells by MR1.</title>
        <authorList>
            <person name="Treiner E."/>
            <person name="Duban L."/>
            <person name="Bahram S."/>
            <person name="Radosavljevic M."/>
            <person name="Wanner V."/>
            <person name="Tilloy F."/>
            <person name="Affaticati P."/>
            <person name="Gilfillan S."/>
            <person name="Lantz O."/>
        </authorList>
    </citation>
    <scope>FUNCTION</scope>
    <scope>DISRUPTION PHENOTYPE</scope>
</reference>
<reference key="8">
    <citation type="journal article" date="2005" name="J. Biol. Chem.">
        <title>Evidence for MR1 antigen presentation to mucosal-associated invariant T cells.</title>
        <authorList>
            <person name="Huang S."/>
            <person name="Gilfillan S."/>
            <person name="Cella M."/>
            <person name="Miley M.J."/>
            <person name="Lantz O."/>
            <person name="Lybarger L."/>
            <person name="Fremont D.H."/>
            <person name="Hansen T.H."/>
        </authorList>
    </citation>
    <scope>FUNCTION</scope>
    <scope>MUTAGENESIS OF TYR-25; ARG-27; PHE-40; LEU-83; GLY-86; LYS-92; ALA-93; GLN-99; TYR-110; ARG-112; LEU-128; TYR-170 AND ALA-181</scope>
</reference>
<reference key="9">
    <citation type="journal article" date="2010" name="Nat. Immunol.">
        <title>Antimicrobial activity of mucosal-associated invariant T cells.</title>
        <authorList>
            <person name="Le Bourhis L."/>
            <person name="Martin E."/>
            <person name="Peguillet I."/>
            <person name="Guihot A."/>
            <person name="Froux N."/>
            <person name="Core M."/>
            <person name="Levy E."/>
            <person name="Dusseaux M."/>
            <person name="Meyssonnier V."/>
            <person name="Premel V."/>
            <person name="Ngo C."/>
            <person name="Riteau B."/>
            <person name="Duban L."/>
            <person name="Robert D."/>
            <person name="Huang S."/>
            <person name="Rottman M."/>
            <person name="Soudais C."/>
            <person name="Lantz O."/>
        </authorList>
    </citation>
    <scope>FUNCTION</scope>
</reference>
<reference key="10">
    <citation type="journal article" date="2013" name="J. Exp. Med.">
        <title>Antigen-loaded MR1 tetramers define T cell receptor heterogeneity in mucosal-associated invariant T cells.</title>
        <authorList>
            <person name="Reantragoon R."/>
            <person name="Corbett A.J."/>
            <person name="Sakala I.G."/>
            <person name="Gherardin N.A."/>
            <person name="Furness J.B."/>
            <person name="Chen Z."/>
            <person name="Eckle S.B."/>
            <person name="Uldrich A.P."/>
            <person name="Birkinshaw R.W."/>
            <person name="Patel O."/>
            <person name="Kostenko L."/>
            <person name="Meehan B."/>
            <person name="Kedzierska K."/>
            <person name="Liu L."/>
            <person name="Fairlie D.P."/>
            <person name="Hansen T.H."/>
            <person name="Godfrey D.I."/>
            <person name="Rossjohn J."/>
            <person name="McCluskey J."/>
            <person name="Kjer-Nielsen L."/>
        </authorList>
    </citation>
    <scope>FUNCTION</scope>
    <scope>SUBUNIT</scope>
</reference>
<reference key="11">
    <citation type="journal article" date="2019" name="Nat. Commun.">
        <title>Diverse MR1-restricted T cells in mice and humans.</title>
        <authorList>
            <person name="Koay H.F."/>
            <person name="Gherardin N.A."/>
            <person name="Xu C."/>
            <person name="Seneviratna R."/>
            <person name="Zhao Z."/>
            <person name="Chen Z."/>
            <person name="Fairlie D.P."/>
            <person name="McCluskey J."/>
            <person name="Pellicci D.G."/>
            <person name="Uldrich A.P."/>
            <person name="Godfrey D.I."/>
        </authorList>
    </citation>
    <scope>FUNCTION</scope>
</reference>
<reference key="12">
    <citation type="journal article" date="2024" name="J. Biol. Chem.">
        <title>Mouse mucosal-associated invariant T cell receptor recognition of MR1 presenting the vitamin B metabolite, 5-(2-oxopropylideneamino)-6-d-ribitylaminouracil.</title>
        <authorList>
            <person name="Ciacchi L."/>
            <person name="Mak J.Y.W."/>
            <person name="Le J.P."/>
            <person name="Fairlie D.P."/>
            <person name="McCluskey J."/>
            <person name="Corbett A.J."/>
            <person name="Rossjohn J."/>
            <person name="Awad W."/>
        </authorList>
    </citation>
    <scope>X-RAY CRYSTALLOGRAPHY (3.40 ANGSTROMS) OF 18-288 IN COMPLEX WITH B2M AND METABOLITE ANTIGEN</scope>
    <scope>DISULFIDE BOND</scope>
    <scope>FUNCTION</scope>
    <scope>SUBUNIT</scope>
</reference>
<dbReference type="EMBL" id="U94989">
    <property type="protein sequence ID" value="AAB81345.1"/>
    <property type="molecule type" value="mRNA"/>
</dbReference>
<dbReference type="EMBL" id="AF068692">
    <property type="protein sequence ID" value="AAD17568.1"/>
    <property type="molecule type" value="Genomic_DNA"/>
</dbReference>
<dbReference type="EMBL" id="AF068691">
    <property type="protein sequence ID" value="AAD17568.1"/>
    <property type="status" value="JOINED"/>
    <property type="molecule type" value="Genomic_DNA"/>
</dbReference>
<dbReference type="EMBL" id="AF010448">
    <property type="protein sequence ID" value="AAD01444.1"/>
    <property type="molecule type" value="mRNA"/>
</dbReference>
<dbReference type="EMBL" id="AF035672">
    <property type="protein sequence ID" value="AAD02040.1"/>
    <property type="molecule type" value="Genomic_DNA"/>
</dbReference>
<dbReference type="EMBL" id="AK042119">
    <property type="protein sequence ID" value="BAC31174.1"/>
    <property type="molecule type" value="mRNA"/>
</dbReference>
<dbReference type="EMBL" id="BC026137">
    <property type="protein sequence ID" value="AAH26137.1"/>
    <property type="molecule type" value="mRNA"/>
</dbReference>
<dbReference type="CCDS" id="CCDS15383.1">
    <molecule id="Q8HWB0-1"/>
</dbReference>
<dbReference type="PIR" id="JC5663">
    <property type="entry name" value="JC5663"/>
</dbReference>
<dbReference type="RefSeq" id="NP_001341992.1">
    <molecule id="Q8HWB0-2"/>
    <property type="nucleotide sequence ID" value="NM_001355063.1"/>
</dbReference>
<dbReference type="RefSeq" id="NP_032235.1">
    <molecule id="Q8HWB0-1"/>
    <property type="nucleotide sequence ID" value="NM_008209.5"/>
</dbReference>
<dbReference type="RefSeq" id="XP_006529207.1">
    <property type="nucleotide sequence ID" value="XM_006529144.2"/>
</dbReference>
<dbReference type="PDB" id="8VZ8">
    <property type="method" value="X-ray"/>
    <property type="resolution" value="3.45 A"/>
    <property type="chains" value="A=18-288"/>
</dbReference>
<dbReference type="PDB" id="8VZ9">
    <property type="method" value="X-ray"/>
    <property type="resolution" value="3.40 A"/>
    <property type="chains" value="A=18-288"/>
</dbReference>
<dbReference type="PDBsum" id="8VZ8"/>
<dbReference type="PDBsum" id="8VZ9"/>
<dbReference type="SMR" id="Q8HWB0"/>
<dbReference type="FunCoup" id="Q8HWB0">
    <property type="interactions" value="324"/>
</dbReference>
<dbReference type="STRING" id="10090.ENSMUSP00000027744"/>
<dbReference type="GlyCosmos" id="Q8HWB0">
    <property type="glycosylation" value="1 site, No reported glycans"/>
</dbReference>
<dbReference type="GlyGen" id="Q8HWB0">
    <property type="glycosylation" value="1 site, 1 N-linked glycan (1 site)"/>
</dbReference>
<dbReference type="PhosphoSitePlus" id="Q8HWB0"/>
<dbReference type="PaxDb" id="10090-ENSMUSP00000027744"/>
<dbReference type="PeptideAtlas" id="Q8HWB0"/>
<dbReference type="ProteomicsDB" id="273369">
    <molecule id="Q8HWB0-1"/>
</dbReference>
<dbReference type="ProteomicsDB" id="273370">
    <molecule id="Q8HWB0-2"/>
</dbReference>
<dbReference type="Pumba" id="Q8HWB0"/>
<dbReference type="Antibodypedia" id="34431">
    <property type="antibodies" value="202 antibodies from 26 providers"/>
</dbReference>
<dbReference type="DNASU" id="15064"/>
<dbReference type="Ensembl" id="ENSMUST00000027744.10">
    <molecule id="Q8HWB0-1"/>
    <property type="protein sequence ID" value="ENSMUSP00000027744.9"/>
    <property type="gene ID" value="ENSMUSG00000026471.15"/>
</dbReference>
<dbReference type="GeneID" id="15064"/>
<dbReference type="KEGG" id="mmu:15064"/>
<dbReference type="UCSC" id="uc007day.1">
    <molecule id="Q8HWB0-1"/>
    <property type="organism name" value="mouse"/>
</dbReference>
<dbReference type="AGR" id="MGI:1195463"/>
<dbReference type="CTD" id="3140"/>
<dbReference type="MGI" id="MGI:1195463">
    <property type="gene designation" value="Mr1"/>
</dbReference>
<dbReference type="VEuPathDB" id="HostDB:ENSMUSG00000026471"/>
<dbReference type="eggNOG" id="ENOG502RQEK">
    <property type="taxonomic scope" value="Eukaryota"/>
</dbReference>
<dbReference type="GeneTree" id="ENSGT01120000271826"/>
<dbReference type="HOGENOM" id="CLU_047501_0_1_1"/>
<dbReference type="InParanoid" id="Q8HWB0"/>
<dbReference type="OMA" id="PEISMMW"/>
<dbReference type="OrthoDB" id="8936120at2759"/>
<dbReference type="PhylomeDB" id="Q8HWB0"/>
<dbReference type="TreeFam" id="TF336617"/>
<dbReference type="BioGRID-ORCS" id="15064">
    <property type="hits" value="1 hit in 79 CRISPR screens"/>
</dbReference>
<dbReference type="ChiTaRS" id="Mr1">
    <property type="organism name" value="mouse"/>
</dbReference>
<dbReference type="PRO" id="PR:Q8HWB0"/>
<dbReference type="Proteomes" id="UP000000589">
    <property type="component" value="Chromosome 1"/>
</dbReference>
<dbReference type="RNAct" id="Q8HWB0">
    <property type="molecule type" value="protein"/>
</dbReference>
<dbReference type="Bgee" id="ENSMUSG00000026471">
    <property type="expression patterns" value="Expressed in thymus and 182 other cell types or tissues"/>
</dbReference>
<dbReference type="ExpressionAtlas" id="Q8HWB0">
    <property type="expression patterns" value="baseline and differential"/>
</dbReference>
<dbReference type="GO" id="GO:0031901">
    <property type="term" value="C:early endosome membrane"/>
    <property type="evidence" value="ECO:0000250"/>
    <property type="project" value="UniProtKB"/>
</dbReference>
<dbReference type="GO" id="GO:0005783">
    <property type="term" value="C:endoplasmic reticulum"/>
    <property type="evidence" value="ECO:0000266"/>
    <property type="project" value="MGI"/>
</dbReference>
<dbReference type="GO" id="GO:0005789">
    <property type="term" value="C:endoplasmic reticulum membrane"/>
    <property type="evidence" value="ECO:0000250"/>
    <property type="project" value="UniProtKB"/>
</dbReference>
<dbReference type="GO" id="GO:0000139">
    <property type="term" value="C:Golgi membrane"/>
    <property type="evidence" value="ECO:0007669"/>
    <property type="project" value="UniProtKB-SubCell"/>
</dbReference>
<dbReference type="GO" id="GO:0031902">
    <property type="term" value="C:late endosome membrane"/>
    <property type="evidence" value="ECO:0000250"/>
    <property type="project" value="UniProtKB"/>
</dbReference>
<dbReference type="GO" id="GO:0042612">
    <property type="term" value="C:MHC class I protein complex"/>
    <property type="evidence" value="ECO:0007669"/>
    <property type="project" value="UniProtKB-KW"/>
</dbReference>
<dbReference type="GO" id="GO:0005886">
    <property type="term" value="C:plasma membrane"/>
    <property type="evidence" value="ECO:0000250"/>
    <property type="project" value="UniProtKB"/>
</dbReference>
<dbReference type="GO" id="GO:0030881">
    <property type="term" value="F:beta-2-microglobulin binding"/>
    <property type="evidence" value="ECO:0000250"/>
    <property type="project" value="UniProtKB"/>
</dbReference>
<dbReference type="GO" id="GO:0042608">
    <property type="term" value="F:T cell receptor binding"/>
    <property type="evidence" value="ECO:0000250"/>
    <property type="project" value="UniProtKB"/>
</dbReference>
<dbReference type="GO" id="GO:0019884">
    <property type="term" value="P:antigen processing and presentation of exogenous antigen"/>
    <property type="evidence" value="ECO:0007669"/>
    <property type="project" value="Ensembl"/>
</dbReference>
<dbReference type="GO" id="GO:0002474">
    <property type="term" value="P:antigen processing and presentation of peptide antigen via MHC class I"/>
    <property type="evidence" value="ECO:0007669"/>
    <property type="project" value="UniProtKB-KW"/>
</dbReference>
<dbReference type="GO" id="GO:0050829">
    <property type="term" value="P:defense response to Gram-negative bacterium"/>
    <property type="evidence" value="ECO:0000315"/>
    <property type="project" value="UniProtKB"/>
</dbReference>
<dbReference type="GO" id="GO:0050830">
    <property type="term" value="P:defense response to Gram-positive bacterium"/>
    <property type="evidence" value="ECO:0000250"/>
    <property type="project" value="UniProtKB"/>
</dbReference>
<dbReference type="GO" id="GO:0045087">
    <property type="term" value="P:innate immune response"/>
    <property type="evidence" value="ECO:0007669"/>
    <property type="project" value="UniProtKB-KW"/>
</dbReference>
<dbReference type="GO" id="GO:0002854">
    <property type="term" value="P:positive regulation of T cell mediated cytotoxicity directed against tumor cell target"/>
    <property type="evidence" value="ECO:0000250"/>
    <property type="project" value="UniProtKB"/>
</dbReference>
<dbReference type="GO" id="GO:0033077">
    <property type="term" value="P:T cell differentiation in thymus"/>
    <property type="evidence" value="ECO:0000315"/>
    <property type="project" value="UniProtKB"/>
</dbReference>
<dbReference type="CDD" id="cd07698">
    <property type="entry name" value="IgC1_MHC_I_alpha3"/>
    <property type="match status" value="1"/>
</dbReference>
<dbReference type="FunFam" id="3.30.500.10:FF:000001">
    <property type="entry name" value="H-2 class I histocompatibility antigen, alpha chain"/>
    <property type="match status" value="1"/>
</dbReference>
<dbReference type="FunFam" id="2.60.40.10:FF:000204">
    <property type="entry name" value="Major histocompatibility complex, class I-related protein"/>
    <property type="match status" value="1"/>
</dbReference>
<dbReference type="Gene3D" id="2.60.40.10">
    <property type="entry name" value="Immunoglobulins"/>
    <property type="match status" value="1"/>
</dbReference>
<dbReference type="Gene3D" id="3.30.500.10">
    <property type="entry name" value="MHC class I-like antigen recognition-like"/>
    <property type="match status" value="1"/>
</dbReference>
<dbReference type="InterPro" id="IPR007110">
    <property type="entry name" value="Ig-like_dom"/>
</dbReference>
<dbReference type="InterPro" id="IPR036179">
    <property type="entry name" value="Ig-like_dom_sf"/>
</dbReference>
<dbReference type="InterPro" id="IPR013783">
    <property type="entry name" value="Ig-like_fold"/>
</dbReference>
<dbReference type="InterPro" id="IPR003006">
    <property type="entry name" value="Ig/MHC_CS"/>
</dbReference>
<dbReference type="InterPro" id="IPR003597">
    <property type="entry name" value="Ig_C1-set"/>
</dbReference>
<dbReference type="InterPro" id="IPR050208">
    <property type="entry name" value="MHC_class-I_related"/>
</dbReference>
<dbReference type="InterPro" id="IPR011161">
    <property type="entry name" value="MHC_I-like_Ag-recog"/>
</dbReference>
<dbReference type="InterPro" id="IPR037055">
    <property type="entry name" value="MHC_I-like_Ag-recog_sf"/>
</dbReference>
<dbReference type="InterPro" id="IPR011162">
    <property type="entry name" value="MHC_I/II-like_Ag-recog"/>
</dbReference>
<dbReference type="InterPro" id="IPR001039">
    <property type="entry name" value="MHC_I_a_a1/a2"/>
</dbReference>
<dbReference type="PANTHER" id="PTHR16675:SF242">
    <property type="entry name" value="MAJOR HISTOCOMPATIBILITY COMPLEX CLASS I-RELATED GENE PROTEIN"/>
    <property type="match status" value="1"/>
</dbReference>
<dbReference type="PANTHER" id="PTHR16675">
    <property type="entry name" value="MHC CLASS I-RELATED"/>
    <property type="match status" value="1"/>
</dbReference>
<dbReference type="Pfam" id="PF07654">
    <property type="entry name" value="C1-set"/>
    <property type="match status" value="1"/>
</dbReference>
<dbReference type="Pfam" id="PF00129">
    <property type="entry name" value="MHC_I"/>
    <property type="match status" value="1"/>
</dbReference>
<dbReference type="PRINTS" id="PR01638">
    <property type="entry name" value="MHCCLASSI"/>
</dbReference>
<dbReference type="SMART" id="SM00407">
    <property type="entry name" value="IGc1"/>
    <property type="match status" value="1"/>
</dbReference>
<dbReference type="SUPFAM" id="SSF48726">
    <property type="entry name" value="Immunoglobulin"/>
    <property type="match status" value="1"/>
</dbReference>
<dbReference type="SUPFAM" id="SSF54452">
    <property type="entry name" value="MHC antigen-recognition domain"/>
    <property type="match status" value="1"/>
</dbReference>
<dbReference type="PROSITE" id="PS50835">
    <property type="entry name" value="IG_LIKE"/>
    <property type="match status" value="1"/>
</dbReference>
<dbReference type="PROSITE" id="PS00290">
    <property type="entry name" value="IG_MHC"/>
    <property type="match status" value="1"/>
</dbReference>
<sequence>MMLLLPLLAVFLVKRSHTRTHSLRYFRLAVSDPGPVVPEFISVGYVDSHPITTYDSVTRQKEPKAPWMAENLAPDHWERYTQLLRGWQQTFKAELRHLQRHYNHSGLHTYQRMIGCELLEDGSTTGFLQYAYDGQDFIIFNKDTLSWLAMDYVAHITKQAWEANLHELQYQKNWLEEECIAWLKRFLEYGRDTLERTEHPVVRTTRKETFPGITTFFCRAHGFYPPEISMTWMKNGEEIAQEVDYGGVLPSGDGTYQTWLSVNLDPQSNDVYSCHVEHCGRQMVLEAPRESGDILRVSTISGTTILIIALAGVGVLIWRRSQELKEVMYQPTQVNEGSSPS</sequence>
<protein>
    <recommendedName>
        <fullName>Major histocompatibility complex class I-related protein 1</fullName>
        <shortName>MHC class I-related protein 1</shortName>
    </recommendedName>
    <alternativeName>
        <fullName>Class I histocompatibility antigen-like protein</fullName>
    </alternativeName>
</protein>
<gene>
    <name evidence="13 16" type="primary">Mr1</name>
    <name type="synonym">Mr1a</name>
</gene>
<evidence type="ECO:0000250" key="1">
    <source>
        <dbReference type="UniProtKB" id="Q95460"/>
    </source>
</evidence>
<evidence type="ECO:0000255" key="2"/>
<evidence type="ECO:0000255" key="3">
    <source>
        <dbReference type="PROSITE-ProRule" id="PRU00114"/>
    </source>
</evidence>
<evidence type="ECO:0000269" key="4">
    <source>
    </source>
</evidence>
<evidence type="ECO:0000269" key="5">
    <source>
    </source>
</evidence>
<evidence type="ECO:0000269" key="6">
    <source>
    </source>
</evidence>
<evidence type="ECO:0000269" key="7">
    <source>
    </source>
</evidence>
<evidence type="ECO:0000269" key="8">
    <source>
    </source>
</evidence>
<evidence type="ECO:0000269" key="9">
    <source>
    </source>
</evidence>
<evidence type="ECO:0000269" key="10">
    <source>
    </source>
</evidence>
<evidence type="ECO:0000269" key="11">
    <source>
    </source>
</evidence>
<evidence type="ECO:0000269" key="12">
    <source>
    </source>
</evidence>
<evidence type="ECO:0000303" key="13">
    <source>
    </source>
</evidence>
<evidence type="ECO:0000303" key="14">
    <source>
    </source>
</evidence>
<evidence type="ECO:0000305" key="15"/>
<evidence type="ECO:0000312" key="16">
    <source>
        <dbReference type="MGI" id="MGI:1195463"/>
    </source>
</evidence>
<evidence type="ECO:0007744" key="17">
    <source>
        <dbReference type="PDB" id="8VZ8"/>
    </source>
</evidence>
<evidence type="ECO:0007744" key="18">
    <source>
        <dbReference type="PDB" id="8VZ9"/>
    </source>
</evidence>
<evidence type="ECO:0007829" key="19">
    <source>
        <dbReference type="PDB" id="8VZ8"/>
    </source>
</evidence>
<evidence type="ECO:0007829" key="20">
    <source>
        <dbReference type="PDB" id="8VZ9"/>
    </source>
</evidence>
<feature type="signal peptide" evidence="2">
    <location>
        <begin position="1"/>
        <end position="18"/>
    </location>
</feature>
<feature type="chain" id="PRO_0000344442" description="Major histocompatibility complex class I-related protein 1">
    <location>
        <begin position="19"/>
        <end position="341"/>
    </location>
</feature>
<feature type="topological domain" description="Extracellular" evidence="2">
    <location>
        <begin position="19"/>
        <end position="296"/>
    </location>
</feature>
<feature type="transmembrane region" description="Helical" evidence="2">
    <location>
        <begin position="297"/>
        <end position="317"/>
    </location>
</feature>
<feature type="topological domain" description="Cytoplasmic" evidence="2">
    <location>
        <begin position="318"/>
        <end position="341"/>
    </location>
</feature>
<feature type="domain" description="Ig-like C1-type" evidence="3">
    <location>
        <begin position="200"/>
        <end position="301"/>
    </location>
</feature>
<feature type="region of interest" description="Antigen-binding cleft" evidence="1">
    <location>
        <begin position="19"/>
        <end position="197"/>
    </location>
</feature>
<feature type="region of interest" description="Alpha-1" evidence="2">
    <location>
        <begin position="19"/>
        <end position="105"/>
    </location>
</feature>
<feature type="region of interest" description="Alpha-2" evidence="2">
    <location>
        <begin position="106"/>
        <end position="197"/>
    </location>
</feature>
<feature type="region of interest" description="Alpha-3" evidence="2">
    <location>
        <begin position="198"/>
        <end position="289"/>
    </location>
</feature>
<feature type="region of interest" description="Connecting peptide" evidence="2">
    <location>
        <begin position="290"/>
        <end position="296"/>
    </location>
</feature>
<feature type="binding site" evidence="1">
    <location>
        <position position="25"/>
    </location>
    <ligand>
        <name>8-(9H-purin-6-yl)-2-oxa-8-azabicyclo[3.3.1]nona-3,6-diene-4,6-dicarbaldehyde</name>
        <dbReference type="ChEBI" id="CHEBI:233180"/>
    </ligand>
</feature>
<feature type="binding site" evidence="1">
    <location>
        <position position="27"/>
    </location>
    <ligand>
        <name>5-(2-oxoethylideneamino)-6-(D-ribitylamino)uracil</name>
        <dbReference type="ChEBI" id="CHEBI:78397"/>
        <note>pathogen-derived metabolite antigen</note>
    </ligand>
</feature>
<feature type="binding site" evidence="10 17 18">
    <location>
        <position position="27"/>
    </location>
    <ligand>
        <name>5-(2-oxopropylideneamino)-6-(D-ribitylamino)uracil</name>
        <dbReference type="ChEBI" id="CHEBI:78398"/>
        <note>pathogen-derived metabolite antigen</note>
    </ligand>
</feature>
<feature type="binding site" evidence="1">
    <location>
        <position position="27"/>
    </location>
    <ligand>
        <name>7-hydroxy-6-methyl-8-(1-D-ribityl)lumazine</name>
        <dbReference type="ChEBI" id="CHEBI:233481"/>
        <note>pathogen-derived metabolite antigen</note>
    </ligand>
</feature>
<feature type="binding site" evidence="1">
    <location>
        <position position="27"/>
    </location>
    <ligand>
        <name>8-(9H-purin-6-yl)-2-oxa-8-azabicyclo[3.3.1]nona-3,6-diene-4,6-dicarbaldehyde</name>
        <dbReference type="ChEBI" id="CHEBI:233180"/>
    </ligand>
</feature>
<feature type="binding site" evidence="1">
    <location>
        <position position="42"/>
    </location>
    <ligand>
        <name>5-(2-oxoethylideneamino)-6-(D-ribitylamino)uracil</name>
        <dbReference type="ChEBI" id="CHEBI:78397"/>
        <note>pathogen-derived metabolite antigen</note>
    </ligand>
</feature>
<feature type="binding site" evidence="10 17 18">
    <location>
        <position position="42"/>
    </location>
    <ligand>
        <name>5-(2-oxopropylideneamino)-6-(D-ribitylamino)uracil</name>
        <dbReference type="ChEBI" id="CHEBI:78398"/>
        <note>pathogen-derived metabolite antigen</note>
    </ligand>
</feature>
<feature type="binding site" evidence="1">
    <location>
        <position position="42"/>
    </location>
    <ligand>
        <name>7-hydroxy-6-methyl-8-(1-D-ribityl)lumazine</name>
        <dbReference type="ChEBI" id="CHEBI:233481"/>
        <note>pathogen-derived metabolite antigen</note>
    </ligand>
</feature>
<feature type="binding site" description="covalent" evidence="1">
    <location>
        <position position="61"/>
    </location>
    <ligand>
        <name>2-amino-4-oxopteridine-6-carbaldehyde</name>
        <dbReference type="ChEBI" id="CHEBI:70981"/>
    </ligand>
</feature>
<feature type="binding site" description="covalent" evidence="1">
    <location>
        <position position="61"/>
    </location>
    <ligand>
        <name>5-(2-oxoethylideneamino)-6-(D-ribitylamino)uracil</name>
        <dbReference type="ChEBI" id="CHEBI:78397"/>
        <note>pathogen-derived metabolite antigen</note>
    </ligand>
</feature>
<feature type="binding site" description="covalent" evidence="10 17 18">
    <location>
        <position position="61"/>
    </location>
    <ligand>
        <name>5-(2-oxopropylideneamino)-6-(D-ribitylamino)uracil</name>
        <dbReference type="ChEBI" id="CHEBI:78398"/>
        <note>pathogen-derived metabolite antigen</note>
    </ligand>
</feature>
<feature type="binding site" description="covalent" evidence="1">
    <location>
        <position position="61"/>
    </location>
    <ligand>
        <name>7-hydroxy-6-methyl-8-(1-D-ribityl)lumazine</name>
        <dbReference type="ChEBI" id="CHEBI:233481"/>
        <note>pathogen-derived metabolite antigen</note>
    </ligand>
</feature>
<feature type="binding site" description="covalent" evidence="1">
    <location>
        <position position="61"/>
    </location>
    <ligand>
        <name>8-(9H-purin-6-yl)-2-oxa-8-azabicyclo[3.3.1]nona-3,6-diene-4,6-dicarbaldehyde</name>
        <dbReference type="ChEBI" id="CHEBI:233180"/>
    </ligand>
</feature>
<feature type="binding site" description="covalent" evidence="1">
    <location>
        <position position="61"/>
    </location>
    <ligand>
        <name>pyridoxal</name>
        <dbReference type="ChEBI" id="CHEBI:17310"/>
    </ligand>
</feature>
<feature type="binding site" evidence="1">
    <location>
        <position position="76"/>
    </location>
    <ligand>
        <name>8-(9H-purin-6-yl)-2-oxa-8-azabicyclo[3.3.1]nona-3,6-diene-4,6-dicarbaldehyde</name>
        <dbReference type="ChEBI" id="CHEBI:233180"/>
    </ligand>
</feature>
<feature type="binding site" evidence="1">
    <location>
        <position position="112"/>
    </location>
    <ligand>
        <name>5-(2-oxoethylideneamino)-6-(D-ribitylamino)uracil</name>
        <dbReference type="ChEBI" id="CHEBI:78397"/>
        <note>pathogen-derived metabolite antigen</note>
    </ligand>
</feature>
<feature type="binding site" evidence="10 18">
    <location>
        <position position="112"/>
    </location>
    <ligand>
        <name>5-(2-oxopropylideneamino)-6-(D-ribitylamino)uracil</name>
        <dbReference type="ChEBI" id="CHEBI:78398"/>
        <note>pathogen-derived metabolite antigen</note>
    </ligand>
</feature>
<feature type="binding site" evidence="1">
    <location>
        <position position="112"/>
    </location>
    <ligand>
        <name>7-hydroxy-6-methyl-8-(1-D-ribityl)lumazine</name>
        <dbReference type="ChEBI" id="CHEBI:233481"/>
        <note>pathogen-derived metabolite antigen</note>
    </ligand>
</feature>
<feature type="binding site" evidence="1">
    <location>
        <position position="112"/>
    </location>
    <ligand>
        <name>8-(9H-purin-6-yl)-2-oxa-8-azabicyclo[3.3.1]nona-3,6-diene-4,6-dicarbaldehyde</name>
        <dbReference type="ChEBI" id="CHEBI:233180"/>
    </ligand>
</feature>
<feature type="binding site" evidence="1">
    <location>
        <position position="170"/>
    </location>
    <ligand>
        <name>5-(2-oxoethylideneamino)-6-(D-ribitylamino)uracil</name>
        <dbReference type="ChEBI" id="CHEBI:78397"/>
        <note>pathogen-derived metabolite antigen</note>
    </ligand>
</feature>
<feature type="binding site" evidence="10 17 18">
    <location>
        <position position="170"/>
    </location>
    <ligand>
        <name>5-(2-oxopropylideneamino)-6-(D-ribitylamino)uracil</name>
        <dbReference type="ChEBI" id="CHEBI:78398"/>
        <note>pathogen-derived metabolite antigen</note>
    </ligand>
</feature>
<feature type="binding site" evidence="1">
    <location>
        <position position="170"/>
    </location>
    <ligand>
        <name>7-hydroxy-6-methyl-8-(1-D-ribityl)lumazine</name>
        <dbReference type="ChEBI" id="CHEBI:233481"/>
        <note>pathogen-derived metabolite antigen</note>
    </ligand>
</feature>
<feature type="binding site" evidence="1">
    <location>
        <position position="171"/>
    </location>
    <ligand>
        <name>5-(2-oxoethylideneamino)-6-(D-ribitylamino)uracil</name>
        <dbReference type="ChEBI" id="CHEBI:78397"/>
        <note>pathogen-derived metabolite antigen</note>
    </ligand>
</feature>
<feature type="binding site" evidence="1">
    <location>
        <position position="171"/>
    </location>
    <ligand>
        <name>5-(2-oxopropylideneamino)-6-(D-ribitylamino)uracil</name>
        <dbReference type="ChEBI" id="CHEBI:78398"/>
        <note>pathogen-derived metabolite antigen</note>
    </ligand>
</feature>
<feature type="binding site" evidence="1">
    <location>
        <position position="171"/>
    </location>
    <ligand>
        <name>7-hydroxy-6-methyl-8-(1-D-ribityl)lumazine</name>
        <dbReference type="ChEBI" id="CHEBI:233481"/>
        <note>pathogen-derived metabolite antigen</note>
    </ligand>
</feature>
<feature type="glycosylation site" description="N-linked (GlcNAc...) asparagine" evidence="2">
    <location>
        <position position="103"/>
    </location>
</feature>
<feature type="disulfide bond" evidence="3 10 17">
    <location>
        <begin position="116"/>
        <end position="179"/>
    </location>
</feature>
<feature type="disulfide bond" evidence="3 10 17">
    <location>
        <begin position="218"/>
        <end position="274"/>
    </location>
</feature>
<feature type="splice variant" id="VSP_034759" description="In isoform 2." evidence="14">
    <location>
        <begin position="1"/>
        <end position="112"/>
    </location>
</feature>
<feature type="mutagenesis site" description="Loss of MAIT cell activation." evidence="6">
    <original>Y</original>
    <variation>L</variation>
    <location>
        <position position="25"/>
    </location>
</feature>
<feature type="mutagenesis site" description="Loss of MAIT cell activation." evidence="6">
    <original>R</original>
    <variation>V</variation>
    <location>
        <position position="27"/>
    </location>
</feature>
<feature type="mutagenesis site" description="Impair expression of folded protein." evidence="6">
    <original>F</original>
    <variation>Y</variation>
    <location>
        <position position="40"/>
    </location>
</feature>
<feature type="mutagenesis site" description="Loss of MAIT cell activation." evidence="6">
    <original>L</original>
    <variation>K</variation>
    <location>
        <position position="83"/>
    </location>
</feature>
<feature type="mutagenesis site" description="Loss of MAIT cell activation." evidence="6">
    <original>G</original>
    <variation>R</variation>
    <location>
        <position position="86"/>
    </location>
</feature>
<feature type="mutagenesis site" description="Reduced MAIT cell activation." evidence="6">
    <original>K</original>
    <variation>R</variation>
    <location>
        <position position="92"/>
    </location>
</feature>
<feature type="mutagenesis site" description="Activated." evidence="6">
    <original>A</original>
    <variation>V</variation>
    <location>
        <position position="93"/>
    </location>
</feature>
<feature type="mutagenesis site" description="Activated." evidence="6">
    <original>Q</original>
    <variation>R</variation>
    <location>
        <position position="99"/>
    </location>
</feature>
<feature type="mutagenesis site" description="Impair expression of folded protein." evidence="6">
    <original>Y</original>
    <variation>I</variation>
    <location>
        <position position="110"/>
    </location>
</feature>
<feature type="mutagenesis site" description="Loss of MAIT cell activation." evidence="6">
    <original>R</original>
    <variation>E</variation>
    <location>
        <position position="112"/>
    </location>
</feature>
<feature type="mutagenesis site" description="Impair expression of folded protein." evidence="6">
    <original>L</original>
    <variation>Q</variation>
    <location>
        <position position="128"/>
    </location>
</feature>
<feature type="mutagenesis site" description="Loss of MAIT cell activation." evidence="6">
    <original>Y</original>
    <variation>R</variation>
    <location>
        <position position="170"/>
    </location>
</feature>
<feature type="mutagenesis site" description="Reduced MAIT cell activation." evidence="6">
    <original>A</original>
    <variation>E</variation>
    <location>
        <position position="181"/>
    </location>
</feature>
<feature type="mutagenesis site" description="No effect on cell surface expression." evidence="5">
    <original>C</original>
    <variation>G</variation>
    <location>
        <position position="279"/>
    </location>
</feature>
<feature type="strand" evidence="20">
    <location>
        <begin position="20"/>
        <end position="32"/>
    </location>
</feature>
<feature type="strand" evidence="20">
    <location>
        <begin position="39"/>
        <end position="46"/>
    </location>
</feature>
<feature type="strand" evidence="20">
    <location>
        <begin position="49"/>
        <end position="55"/>
    </location>
</feature>
<feature type="turn" evidence="20">
    <location>
        <begin position="56"/>
        <end position="58"/>
    </location>
</feature>
<feature type="strand" evidence="20">
    <location>
        <begin position="62"/>
        <end position="65"/>
    </location>
</feature>
<feature type="helix" evidence="20">
    <location>
        <begin position="66"/>
        <end position="69"/>
    </location>
</feature>
<feature type="helix" evidence="20">
    <location>
        <begin position="76"/>
        <end position="101"/>
    </location>
</feature>
<feature type="strand" evidence="20">
    <location>
        <begin position="109"/>
        <end position="119"/>
    </location>
</feature>
<feature type="helix" evidence="19">
    <location>
        <begin position="120"/>
        <end position="122"/>
    </location>
</feature>
<feature type="strand" evidence="20">
    <location>
        <begin position="124"/>
        <end position="132"/>
    </location>
</feature>
<feature type="strand" evidence="20">
    <location>
        <begin position="135"/>
        <end position="141"/>
    </location>
</feature>
<feature type="turn" evidence="20">
    <location>
        <begin position="142"/>
        <end position="145"/>
    </location>
</feature>
<feature type="strand" evidence="20">
    <location>
        <begin position="146"/>
        <end position="151"/>
    </location>
</feature>
<feature type="helix" evidence="20">
    <location>
        <begin position="152"/>
        <end position="161"/>
    </location>
</feature>
<feature type="helix" evidence="20">
    <location>
        <begin position="165"/>
        <end position="176"/>
    </location>
</feature>
<feature type="helix" evidence="20">
    <location>
        <begin position="178"/>
        <end position="188"/>
    </location>
</feature>
<feature type="helix" evidence="20">
    <location>
        <begin position="191"/>
        <end position="194"/>
    </location>
</feature>
<feature type="strand" evidence="20">
    <location>
        <begin position="203"/>
        <end position="207"/>
    </location>
</feature>
<feature type="strand" evidence="20">
    <location>
        <begin position="215"/>
        <end position="226"/>
    </location>
</feature>
<feature type="strand" evidence="20">
    <location>
        <begin position="229"/>
        <end position="237"/>
    </location>
</feature>
<feature type="strand" evidence="20">
    <location>
        <begin position="242"/>
        <end position="250"/>
    </location>
</feature>
<feature type="strand" evidence="20">
    <location>
        <begin position="252"/>
        <end position="254"/>
    </location>
</feature>
<feature type="strand" evidence="20">
    <location>
        <begin position="256"/>
        <end position="263"/>
    </location>
</feature>
<feature type="strand" evidence="20">
    <location>
        <begin position="272"/>
        <end position="278"/>
    </location>
</feature>
<feature type="strand" evidence="20">
    <location>
        <begin position="281"/>
        <end position="285"/>
    </location>
</feature>
<organism>
    <name type="scientific">Mus musculus</name>
    <name type="common">Mouse</name>
    <dbReference type="NCBI Taxonomy" id="10090"/>
    <lineage>
        <taxon>Eukaryota</taxon>
        <taxon>Metazoa</taxon>
        <taxon>Chordata</taxon>
        <taxon>Craniata</taxon>
        <taxon>Vertebrata</taxon>
        <taxon>Euteleostomi</taxon>
        <taxon>Mammalia</taxon>
        <taxon>Eutheria</taxon>
        <taxon>Euarchontoglires</taxon>
        <taxon>Glires</taxon>
        <taxon>Rodentia</taxon>
        <taxon>Myomorpha</taxon>
        <taxon>Muroidea</taxon>
        <taxon>Muridae</taxon>
        <taxon>Murinae</taxon>
        <taxon>Mus</taxon>
        <taxon>Mus</taxon>
    </lineage>
</organism>